<gene>
    <name type="primary">VPS28</name>
</gene>
<accession>Q9UK41</accession>
<accession>Q86VK0</accession>
<comment type="function">
    <text evidence="3">Component of the ESCRT-I complex, a regulator of vesicular trafficking process.</text>
</comment>
<comment type="subunit">
    <text evidence="4 5 6 7 8 9 10">Component of the ESCRT-I complex (endosomal sorting complex required for transport I) which consists of TSG101, VPS28, a VPS37 protein (VPS37A to -D) and MVB12A or MVB12B in a 1:1:1:1 stoichiometry (PubMed:14505570, PubMed:18005716). Interacts with TSG101, VPS37B, VPS37C, MVB12A and MVB12B (PubMed:14505570, PubMed:15218037, PubMed:18005716). Component of an ESCRT-I complex (endosomal sorting complex required for transport I) which consists of TSG101, VPS28, VPS37A and UBAP1 in a 1:1:1:1 stoichiometry (PubMed:14505570, PubMed:21757351, PubMed:30929741). Interacts with VPS36; the interaction mediates the association with the ESCRT-II complex. Interacts with SNF8 and VPS25 (PubMed:18539118). Interacts with CEP55 (PubMed:17853893).</text>
</comment>
<comment type="interaction">
    <interactant intactId="EBI-727424">
        <id>Q9UK41</id>
    </interactant>
    <interactant intactId="EBI-2548012">
        <id>Q9H2G9</id>
        <label>BLZF1</label>
    </interactant>
    <organismsDiffer>false</organismsDiffer>
    <experiments>3</experiments>
</comment>
<comment type="interaction">
    <interactant intactId="EBI-727424">
        <id>Q9UK41</id>
    </interactant>
    <interactant intactId="EBI-10303102">
        <id>Q9BZE7</id>
        <label>C22orf23</label>
    </interactant>
    <organismsDiffer>false</organismsDiffer>
    <experiments>2</experiments>
</comment>
<comment type="interaction">
    <interactant intactId="EBI-727424">
        <id>Q9UK41</id>
    </interactant>
    <interactant intactId="EBI-11530605">
        <id>Q9H257-2</id>
        <label>CARD9</label>
    </interactant>
    <organismsDiffer>false</organismsDiffer>
    <experiments>4</experiments>
</comment>
<comment type="interaction">
    <interactant intactId="EBI-727424">
        <id>Q9UK41</id>
    </interactant>
    <interactant intactId="EBI-16431743">
        <id>Q9H257-3</id>
        <label>CARD9</label>
    </interactant>
    <organismsDiffer>false</organismsDiffer>
    <experiments>3</experiments>
</comment>
<comment type="interaction">
    <interactant intactId="EBI-727424">
        <id>Q9UK41</id>
    </interactant>
    <interactant intactId="EBI-618309">
        <id>Q08379</id>
        <label>GOLGA2</label>
    </interactant>
    <organismsDiffer>false</organismsDiffer>
    <experiments>6</experiments>
</comment>
<comment type="interaction">
    <interactant intactId="EBI-727424">
        <id>Q9UK41</id>
    </interactant>
    <interactant intactId="EBI-466029">
        <id>P42858</id>
        <label>HTT</label>
    </interactant>
    <organismsDiffer>false</organismsDiffer>
    <experiments>16</experiments>
</comment>
<comment type="interaction">
    <interactant intactId="EBI-727424">
        <id>Q9UK41</id>
    </interactant>
    <interactant intactId="EBI-10182361">
        <id>Q9NS73-5</id>
        <label>MBIP</label>
    </interactant>
    <organismsDiffer>false</organismsDiffer>
    <experiments>3</experiments>
</comment>
<comment type="interaction">
    <interactant intactId="EBI-727424">
        <id>Q9UK41</id>
    </interactant>
    <interactant intactId="EBI-960502">
        <id>Q8WWW0-2</id>
        <label>RASSF5</label>
    </interactant>
    <organismsDiffer>false</organismsDiffer>
    <experiments>3</experiments>
</comment>
<comment type="interaction">
    <interactant intactId="EBI-727424">
        <id>Q9UK41</id>
    </interactant>
    <interactant intactId="EBI-3957636">
        <id>Q8IYX7</id>
        <label>SAXO1</label>
    </interactant>
    <organismsDiffer>false</organismsDiffer>
    <experiments>3</experiments>
</comment>
<comment type="interaction">
    <interactant intactId="EBI-727424">
        <id>Q9UK41</id>
    </interactant>
    <interactant intactId="EBI-2902468">
        <id>P12757</id>
        <label>SKIL</label>
    </interactant>
    <organismsDiffer>false</organismsDiffer>
    <experiments>4</experiments>
</comment>
<comment type="interaction">
    <interactant intactId="EBI-727424">
        <id>Q9UK41</id>
    </interactant>
    <interactant intactId="EBI-395421">
        <id>Q16637</id>
        <label>SMN2</label>
    </interactant>
    <organismsDiffer>false</organismsDiffer>
    <experiments>5</experiments>
</comment>
<comment type="interaction">
    <interactant intactId="EBI-727424">
        <id>Q9UK41</id>
    </interactant>
    <interactant intactId="EBI-395447">
        <id>Q16637-3</id>
        <label>SMN2</label>
    </interactant>
    <organismsDiffer>false</organismsDiffer>
    <experiments>3</experiments>
</comment>
<comment type="interaction">
    <interactant intactId="EBI-727424">
        <id>Q9UK41</id>
    </interactant>
    <interactant intactId="EBI-11952764">
        <id>Q99081-3</id>
        <label>TCF12</label>
    </interactant>
    <organismsDiffer>false</organismsDiffer>
    <experiments>3</experiments>
</comment>
<comment type="interaction">
    <interactant intactId="EBI-727424">
        <id>Q9UK41</id>
    </interactant>
    <interactant intactId="EBI-719493">
        <id>P14373</id>
        <label>TRIM27</label>
    </interactant>
    <organismsDiffer>false</organismsDiffer>
    <experiments>3</experiments>
</comment>
<comment type="interaction">
    <interactant intactId="EBI-727424">
        <id>Q9UK41</id>
    </interactant>
    <interactant intactId="EBI-346882">
        <id>Q99816</id>
        <label>TSG101</label>
    </interactant>
    <organismsDiffer>false</organismsDiffer>
    <experiments>15</experiments>
</comment>
<comment type="interaction">
    <interactant intactId="EBI-727424">
        <id>Q9UK41</id>
    </interactant>
    <interactant intactId="EBI-739895">
        <id>Q8N6Y0</id>
        <label>USHBP1</label>
    </interactant>
    <organismsDiffer>false</organismsDiffer>
    <experiments>6</experiments>
</comment>
<comment type="interaction">
    <interactant intactId="EBI-727424">
        <id>Q9UK41</id>
    </interactant>
    <interactant intactId="EBI-4400866">
        <id>Q9H9H4</id>
        <label>VPS37B</label>
    </interactant>
    <organismsDiffer>false</organismsDiffer>
    <experiments>10</experiments>
</comment>
<comment type="interaction">
    <interactant intactId="EBI-727424">
        <id>Q9UK41</id>
    </interactant>
    <interactant intactId="EBI-2799833">
        <id>Q8N1B4</id>
        <label>VPS52</label>
    </interactant>
    <organismsDiffer>false</organismsDiffer>
    <experiments>4</experiments>
</comment>
<comment type="interaction">
    <interactant intactId="EBI-12146727">
        <id>Q9UK41-2</id>
    </interactant>
    <interactant intactId="EBI-11096309">
        <id>Q9NYB9-2</id>
        <label>ABI2</label>
    </interactant>
    <organismsDiffer>false</organismsDiffer>
    <experiments>3</experiments>
</comment>
<comment type="interaction">
    <interactant intactId="EBI-12146727">
        <id>Q9UK41-2</id>
    </interactant>
    <interactant intactId="EBI-745073">
        <id>Q9BXY8</id>
        <label>BEX2</label>
    </interactant>
    <organismsDiffer>false</organismsDiffer>
    <experiments>3</experiments>
</comment>
<comment type="interaction">
    <interactant intactId="EBI-12146727">
        <id>Q9UK41-2</id>
    </interactant>
    <interactant intactId="EBI-10749669">
        <id>Q8IYE0</id>
        <label>CCDC146</label>
    </interactant>
    <organismsDiffer>false</organismsDiffer>
    <experiments>3</experiments>
</comment>
<comment type="interaction">
    <interactant intactId="EBI-12146727">
        <id>Q9UK41-2</id>
    </interactant>
    <interactant intactId="EBI-746238">
        <id>Q07002</id>
        <label>CDK18</label>
    </interactant>
    <organismsDiffer>false</organismsDiffer>
    <experiments>3</experiments>
</comment>
<comment type="interaction">
    <interactant intactId="EBI-12146727">
        <id>Q9UK41-2</id>
    </interactant>
    <interactant intactId="EBI-1053725">
        <id>P10606</id>
        <label>COX5B</label>
    </interactant>
    <organismsDiffer>false</organismsDiffer>
    <experiments>3</experiments>
</comment>
<comment type="interaction">
    <interactant intactId="EBI-12146727">
        <id>Q9UK41-2</id>
    </interactant>
    <interactant intactId="EBI-744104">
        <id>P55040</id>
        <label>GEM</label>
    </interactant>
    <organismsDiffer>false</organismsDiffer>
    <experiments>3</experiments>
</comment>
<comment type="interaction">
    <interactant intactId="EBI-12146727">
        <id>Q9UK41-2</id>
    </interactant>
    <interactant intactId="EBI-11742507">
        <id>Q8TAP4-4</id>
        <label>LMO3</label>
    </interactant>
    <organismsDiffer>false</organismsDiffer>
    <experiments>3</experiments>
</comment>
<comment type="interaction">
    <interactant intactId="EBI-12146727">
        <id>Q9UK41-2</id>
    </interactant>
    <interactant intactId="EBI-1042642">
        <id>Q9H7Z3</id>
        <label>NRDE2</label>
    </interactant>
    <organismsDiffer>false</organismsDiffer>
    <experiments>3</experiments>
</comment>
<comment type="interaction">
    <interactant intactId="EBI-12146727">
        <id>Q9UK41-2</id>
    </interactant>
    <interactant intactId="EBI-398874">
        <id>Q9UBU9</id>
        <label>NXF1</label>
    </interactant>
    <organismsDiffer>false</organismsDiffer>
    <experiments>3</experiments>
</comment>
<comment type="interaction">
    <interactant intactId="EBI-12146727">
        <id>Q9UK41-2</id>
    </interactant>
    <interactant intactId="EBI-1383852">
        <id>P54646</id>
        <label>PRKAA2</label>
    </interactant>
    <organismsDiffer>false</organismsDiffer>
    <experiments>3</experiments>
</comment>
<comment type="interaction">
    <interactant intactId="EBI-12146727">
        <id>Q9UK41-2</id>
    </interactant>
    <interactant intactId="EBI-1053424">
        <id>O43741</id>
        <label>PRKAB2</label>
    </interactant>
    <organismsDiffer>false</organismsDiffer>
    <experiments>3</experiments>
</comment>
<comment type="interaction">
    <interactant intactId="EBI-12146727">
        <id>Q9UK41-2</id>
    </interactant>
    <interactant intactId="EBI-79084">
        <id>Q92529</id>
        <label>SHC3</label>
    </interactant>
    <organismsDiffer>false</organismsDiffer>
    <experiments>3</experiments>
</comment>
<comment type="interaction">
    <interactant intactId="EBI-12146727">
        <id>Q9UK41-2</id>
    </interactant>
    <interactant intactId="EBI-3921347">
        <id>P51687</id>
        <label>SUOX</label>
    </interactant>
    <organismsDiffer>false</organismsDiffer>
    <experiments>3</experiments>
</comment>
<comment type="interaction">
    <interactant intactId="EBI-12146727">
        <id>Q9UK41-2</id>
    </interactant>
    <interactant intactId="EBI-346882">
        <id>Q99816</id>
        <label>TSG101</label>
    </interactant>
    <organismsDiffer>false</organismsDiffer>
    <experiments>6</experiments>
</comment>
<comment type="interaction">
    <interactant intactId="EBI-12146727">
        <id>Q9UK41-2</id>
    </interactant>
    <interactant intactId="EBI-21353855">
        <id>Q99598</id>
        <label>TSNAX</label>
    </interactant>
    <organismsDiffer>false</organismsDiffer>
    <experiments>6</experiments>
</comment>
<comment type="interaction">
    <interactant intactId="EBI-12146727">
        <id>Q9UK41-2</id>
    </interactant>
    <interactant intactId="EBI-743272">
        <id>O75604</id>
        <label>USP2</label>
    </interactant>
    <organismsDiffer>false</organismsDiffer>
    <experiments>3</experiments>
</comment>
<comment type="subcellular location">
    <subcellularLocation>
        <location evidence="3">Cell membrane</location>
    </subcellularLocation>
    <subcellularLocation>
        <location evidence="3">Late endosome membrane</location>
        <topology evidence="3">Peripheral membrane protein</topology>
    </subcellularLocation>
</comment>
<comment type="alternative products">
    <event type="alternative splicing"/>
    <isoform>
        <id>Q9UK41-1</id>
        <name>1</name>
        <sequence type="displayed"/>
    </isoform>
    <isoform>
        <id>Q9UK41-2</id>
        <name>2</name>
        <sequence type="described" ref="VSP_042028"/>
    </isoform>
</comment>
<comment type="similarity">
    <text evidence="1 2">Belongs to the VPS28 family.</text>
</comment>
<organism>
    <name type="scientific">Homo sapiens</name>
    <name type="common">Human</name>
    <dbReference type="NCBI Taxonomy" id="9606"/>
    <lineage>
        <taxon>Eukaryota</taxon>
        <taxon>Metazoa</taxon>
        <taxon>Chordata</taxon>
        <taxon>Craniata</taxon>
        <taxon>Vertebrata</taxon>
        <taxon>Euteleostomi</taxon>
        <taxon>Mammalia</taxon>
        <taxon>Eutheria</taxon>
        <taxon>Euarchontoglires</taxon>
        <taxon>Primates</taxon>
        <taxon>Haplorrhini</taxon>
        <taxon>Catarrhini</taxon>
        <taxon>Hominidae</taxon>
        <taxon>Homo</taxon>
    </lineage>
</organism>
<dbReference type="EMBL" id="AF182844">
    <property type="protein sequence ID" value="AAF00499.1"/>
    <property type="molecule type" value="mRNA"/>
</dbReference>
<dbReference type="EMBL" id="AF205589">
    <property type="status" value="NOT_ANNOTATED_CDS"/>
    <property type="molecule type" value="Genomic_DNA"/>
</dbReference>
<dbReference type="EMBL" id="BC006485">
    <property type="protein sequence ID" value="AAH06485.1"/>
    <property type="molecule type" value="mRNA"/>
</dbReference>
<dbReference type="EMBL" id="BC019321">
    <property type="protein sequence ID" value="AAH19321.1"/>
    <property type="molecule type" value="mRNA"/>
</dbReference>
<dbReference type="EMBL" id="BC050713">
    <property type="protein sequence ID" value="AAH50713.1"/>
    <property type="molecule type" value="mRNA"/>
</dbReference>
<dbReference type="CCDS" id="CCDS34967.1">
    <molecule id="Q9UK41-2"/>
</dbReference>
<dbReference type="CCDS" id="CCDS6425.1">
    <molecule id="Q9UK41-1"/>
</dbReference>
<dbReference type="RefSeq" id="NP_057292.1">
    <molecule id="Q9UK41-1"/>
    <property type="nucleotide sequence ID" value="NM_016208.4"/>
</dbReference>
<dbReference type="RefSeq" id="NP_898880.1">
    <molecule id="Q9UK41-2"/>
    <property type="nucleotide sequence ID" value="NM_183057.3"/>
</dbReference>
<dbReference type="PDB" id="6VME">
    <property type="method" value="X-ray"/>
    <property type="resolution" value="2.19 A"/>
    <property type="chains" value="E/U/V/W/X/Y=1-122"/>
</dbReference>
<dbReference type="PDBsum" id="6VME"/>
<dbReference type="BMRB" id="Q9UK41"/>
<dbReference type="SMR" id="Q9UK41"/>
<dbReference type="BioGRID" id="119341">
    <property type="interactions" value="119"/>
</dbReference>
<dbReference type="ComplexPortal" id="CPX-2505">
    <property type="entry name" value="ESCRT-I complex, VPS37B-MVB12A variant"/>
</dbReference>
<dbReference type="ComplexPortal" id="CPX-7146">
    <property type="entry name" value="ESCRT-I complex, VPS37A-MVB12B variant"/>
</dbReference>
<dbReference type="ComplexPortal" id="CPX-7147">
    <property type="entry name" value="ESCRT-I complex, VPS37C-MVB12A variant"/>
</dbReference>
<dbReference type="ComplexPortal" id="CPX-7148">
    <property type="entry name" value="ESCRT-I complex, VPS37D-MVB12A variant"/>
</dbReference>
<dbReference type="ComplexPortal" id="CPX-7162">
    <property type="entry name" value="ESCRT-I complex, VPS37A-MVB12A variant"/>
</dbReference>
<dbReference type="ComplexPortal" id="CPX-7164">
    <property type="entry name" value="ESCRT-I complex, VPS37B-MVB12B variant"/>
</dbReference>
<dbReference type="ComplexPortal" id="CPX-7166">
    <property type="entry name" value="ESCRT-I complex, VPS37C-MVB12B variant"/>
</dbReference>
<dbReference type="ComplexPortal" id="CPX-7167">
    <property type="entry name" value="ESCRT-I complex, VPS37D-MVB12B variant"/>
</dbReference>
<dbReference type="ComplexPortal" id="CPX-7181">
    <property type="entry name" value="ESCRT-I complex, VPS37A-UBAP1 variant"/>
</dbReference>
<dbReference type="ComplexPortal" id="CPX-7201">
    <property type="entry name" value="ESCRT-I complex, VPS37B-UBAP1 variant"/>
</dbReference>
<dbReference type="ComplexPortal" id="CPX-7202">
    <property type="entry name" value="ESCRT-I complex, VPS37C-UBAP1 variant"/>
</dbReference>
<dbReference type="ComplexPortal" id="CPX-7203">
    <property type="entry name" value="ESCRT-I complex, VPS37D-UBAP1 variant"/>
</dbReference>
<dbReference type="CORUM" id="Q9UK41"/>
<dbReference type="FunCoup" id="Q9UK41">
    <property type="interactions" value="2276"/>
</dbReference>
<dbReference type="IntAct" id="Q9UK41">
    <property type="interactions" value="90"/>
</dbReference>
<dbReference type="MINT" id="Q9UK41"/>
<dbReference type="STRING" id="9606.ENSP00000366565"/>
<dbReference type="GlyGen" id="Q9UK41">
    <property type="glycosylation" value="2 sites, 1 O-linked glycan (1 site)"/>
</dbReference>
<dbReference type="iPTMnet" id="Q9UK41"/>
<dbReference type="MetOSite" id="Q9UK41"/>
<dbReference type="PhosphoSitePlus" id="Q9UK41"/>
<dbReference type="SwissPalm" id="Q9UK41"/>
<dbReference type="BioMuta" id="VPS28"/>
<dbReference type="DMDM" id="13124619"/>
<dbReference type="jPOST" id="Q9UK41"/>
<dbReference type="MassIVE" id="Q9UK41"/>
<dbReference type="PaxDb" id="9606-ENSP00000366565"/>
<dbReference type="PeptideAtlas" id="Q9UK41"/>
<dbReference type="ProteomicsDB" id="84715">
    <molecule id="Q9UK41-1"/>
</dbReference>
<dbReference type="ProteomicsDB" id="84716">
    <molecule id="Q9UK41-2"/>
</dbReference>
<dbReference type="Pumba" id="Q9UK41"/>
<dbReference type="TopDownProteomics" id="Q9UK41-1">
    <molecule id="Q9UK41-1"/>
</dbReference>
<dbReference type="Antibodypedia" id="14872">
    <property type="antibodies" value="202 antibodies from 31 providers"/>
</dbReference>
<dbReference type="DNASU" id="51160"/>
<dbReference type="Ensembl" id="ENST00000292510.6">
    <molecule id="Q9UK41-1"/>
    <property type="protein sequence ID" value="ENSP00000292510.3"/>
    <property type="gene ID" value="ENSG00000160948.14"/>
</dbReference>
<dbReference type="Ensembl" id="ENST00000377348.6">
    <molecule id="Q9UK41-2"/>
    <property type="protein sequence ID" value="ENSP00000366565.2"/>
    <property type="gene ID" value="ENSG00000160948.14"/>
</dbReference>
<dbReference type="Ensembl" id="ENST00000526054.5">
    <molecule id="Q9UK41-1"/>
    <property type="protein sequence ID" value="ENSP00000434064.1"/>
    <property type="gene ID" value="ENSG00000160948.14"/>
</dbReference>
<dbReference type="Ensembl" id="ENST00000529182.5">
    <molecule id="Q9UK41-2"/>
    <property type="protein sequence ID" value="ENSP00000434556.1"/>
    <property type="gene ID" value="ENSG00000160948.14"/>
</dbReference>
<dbReference type="Ensembl" id="ENST00000642202.1">
    <molecule id="Q9UK41-2"/>
    <property type="protein sequence ID" value="ENSP00000494521.1"/>
    <property type="gene ID" value="ENSG00000285339.2"/>
</dbReference>
<dbReference type="Ensembl" id="ENST00000642867.1">
    <molecule id="Q9UK41-1"/>
    <property type="protein sequence ID" value="ENSP00000496519.1"/>
    <property type="gene ID" value="ENSG00000285339.2"/>
</dbReference>
<dbReference type="Ensembl" id="ENST00000643186.2">
    <molecule id="Q9UK41-1"/>
    <property type="protein sequence ID" value="ENSP00000496693.1"/>
    <property type="gene ID" value="ENSG00000285339.2"/>
</dbReference>
<dbReference type="Ensembl" id="ENST00000646588.1">
    <molecule id="Q9UK41-2"/>
    <property type="protein sequence ID" value="ENSP00000495408.1"/>
    <property type="gene ID" value="ENSG00000285339.2"/>
</dbReference>
<dbReference type="GeneID" id="51160"/>
<dbReference type="KEGG" id="hsa:51160"/>
<dbReference type="MANE-Select" id="ENST00000292510.6">
    <property type="protein sequence ID" value="ENSP00000292510.3"/>
    <property type="RefSeq nucleotide sequence ID" value="NM_016208.4"/>
    <property type="RefSeq protein sequence ID" value="NP_057292.1"/>
</dbReference>
<dbReference type="UCSC" id="uc003zcs.2">
    <molecule id="Q9UK41-1"/>
    <property type="organism name" value="human"/>
</dbReference>
<dbReference type="AGR" id="HGNC:18178"/>
<dbReference type="CTD" id="51160"/>
<dbReference type="DisGeNET" id="51160"/>
<dbReference type="GeneCards" id="VPS28"/>
<dbReference type="HGNC" id="HGNC:18178">
    <property type="gene designation" value="VPS28"/>
</dbReference>
<dbReference type="HPA" id="ENSG00000160948">
    <property type="expression patterns" value="Low tissue specificity"/>
</dbReference>
<dbReference type="MIM" id="611952">
    <property type="type" value="gene"/>
</dbReference>
<dbReference type="neXtProt" id="NX_Q9UK41"/>
<dbReference type="OpenTargets" id="ENSG00000160948"/>
<dbReference type="PharmGKB" id="PA38512"/>
<dbReference type="VEuPathDB" id="HostDB:ENSG00000160948"/>
<dbReference type="eggNOG" id="KOG3284">
    <property type="taxonomic scope" value="Eukaryota"/>
</dbReference>
<dbReference type="GeneTree" id="ENSGT00390000007486"/>
<dbReference type="HOGENOM" id="CLU_076417_2_0_1"/>
<dbReference type="InParanoid" id="Q9UK41"/>
<dbReference type="OMA" id="CDEFPTV"/>
<dbReference type="OrthoDB" id="2671at2759"/>
<dbReference type="PAN-GO" id="Q9UK41">
    <property type="GO annotations" value="3 GO annotations based on evolutionary models"/>
</dbReference>
<dbReference type="PhylomeDB" id="Q9UK41"/>
<dbReference type="TreeFam" id="TF313364"/>
<dbReference type="PathwayCommons" id="Q9UK41"/>
<dbReference type="Reactome" id="R-HSA-162588">
    <property type="pathway name" value="Budding and maturation of HIV virion"/>
</dbReference>
<dbReference type="Reactome" id="R-HSA-174490">
    <property type="pathway name" value="Membrane binding and targetting of GAG proteins"/>
</dbReference>
<dbReference type="Reactome" id="R-HSA-917729">
    <property type="pathway name" value="Endosomal Sorting Complex Required For Transport (ESCRT)"/>
</dbReference>
<dbReference type="Reactome" id="R-HSA-9610379">
    <property type="pathway name" value="HCMV Late Events"/>
</dbReference>
<dbReference type="Reactome" id="R-HSA-9615710">
    <property type="pathway name" value="Late endosomal microautophagy"/>
</dbReference>
<dbReference type="SignaLink" id="Q9UK41"/>
<dbReference type="BioGRID-ORCS" id="51160">
    <property type="hits" value="839 hits in 1172 CRISPR screens"/>
</dbReference>
<dbReference type="ChiTaRS" id="VPS28">
    <property type="organism name" value="human"/>
</dbReference>
<dbReference type="GeneWiki" id="VPS28"/>
<dbReference type="GenomeRNAi" id="51160"/>
<dbReference type="Pharos" id="Q9UK41">
    <property type="development level" value="Tbio"/>
</dbReference>
<dbReference type="PRO" id="PR:Q9UK41"/>
<dbReference type="Proteomes" id="UP000005640">
    <property type="component" value="Chromosome 8"/>
</dbReference>
<dbReference type="RNAct" id="Q9UK41">
    <property type="molecule type" value="protein"/>
</dbReference>
<dbReference type="Bgee" id="ENSG00000160948">
    <property type="expression patterns" value="Expressed in right uterine tube and 101 other cell types or tissues"/>
</dbReference>
<dbReference type="ExpressionAtlas" id="Q9UK41">
    <property type="expression patterns" value="baseline and differential"/>
</dbReference>
<dbReference type="GO" id="GO:0005737">
    <property type="term" value="C:cytoplasm"/>
    <property type="evidence" value="ECO:0000314"/>
    <property type="project" value="UniProtKB"/>
</dbReference>
<dbReference type="GO" id="GO:0005829">
    <property type="term" value="C:cytosol"/>
    <property type="evidence" value="ECO:0000314"/>
    <property type="project" value="MGI"/>
</dbReference>
<dbReference type="GO" id="GO:0005769">
    <property type="term" value="C:early endosome"/>
    <property type="evidence" value="ECO:0000314"/>
    <property type="project" value="UniProtKB"/>
</dbReference>
<dbReference type="GO" id="GO:0005768">
    <property type="term" value="C:endosome"/>
    <property type="evidence" value="ECO:0000314"/>
    <property type="project" value="UniProtKB"/>
</dbReference>
<dbReference type="GO" id="GO:0010008">
    <property type="term" value="C:endosome membrane"/>
    <property type="evidence" value="ECO:0000314"/>
    <property type="project" value="UniProtKB"/>
</dbReference>
<dbReference type="GO" id="GO:0000813">
    <property type="term" value="C:ESCRT I complex"/>
    <property type="evidence" value="ECO:0000314"/>
    <property type="project" value="UniProtKB"/>
</dbReference>
<dbReference type="GO" id="GO:0070062">
    <property type="term" value="C:extracellular exosome"/>
    <property type="evidence" value="ECO:0007005"/>
    <property type="project" value="UniProtKB"/>
</dbReference>
<dbReference type="GO" id="GO:0031902">
    <property type="term" value="C:late endosome membrane"/>
    <property type="evidence" value="ECO:0007669"/>
    <property type="project" value="UniProtKB-SubCell"/>
</dbReference>
<dbReference type="GO" id="GO:0005886">
    <property type="term" value="C:plasma membrane"/>
    <property type="evidence" value="ECO:0000314"/>
    <property type="project" value="UniProtKB"/>
</dbReference>
<dbReference type="GO" id="GO:0044877">
    <property type="term" value="F:protein-containing complex binding"/>
    <property type="evidence" value="ECO:0000318"/>
    <property type="project" value="GO_Central"/>
</dbReference>
<dbReference type="GO" id="GO:0043130">
    <property type="term" value="F:ubiquitin binding"/>
    <property type="evidence" value="ECO:0000314"/>
    <property type="project" value="UniProtKB"/>
</dbReference>
<dbReference type="GO" id="GO:0016236">
    <property type="term" value="P:macroautophagy"/>
    <property type="evidence" value="ECO:0000304"/>
    <property type="project" value="ParkinsonsUK-UCL"/>
</dbReference>
<dbReference type="GO" id="GO:0090148">
    <property type="term" value="P:membrane fission"/>
    <property type="evidence" value="ECO:0000303"/>
    <property type="project" value="ComplexPortal"/>
</dbReference>
<dbReference type="GO" id="GO:0036258">
    <property type="term" value="P:multivesicular body assembly"/>
    <property type="evidence" value="ECO:0000304"/>
    <property type="project" value="ParkinsonsUK-UCL"/>
</dbReference>
<dbReference type="GO" id="GO:0031397">
    <property type="term" value="P:negative regulation of protein ubiquitination"/>
    <property type="evidence" value="ECO:0000314"/>
    <property type="project" value="UniProtKB"/>
</dbReference>
<dbReference type="GO" id="GO:0045732">
    <property type="term" value="P:positive regulation of protein catabolic process"/>
    <property type="evidence" value="ECO:0000315"/>
    <property type="project" value="UniProtKB"/>
</dbReference>
<dbReference type="GO" id="GO:2000397">
    <property type="term" value="P:positive regulation of ubiquitin-dependent endocytosis"/>
    <property type="evidence" value="ECO:0000315"/>
    <property type="project" value="UniProtKB"/>
</dbReference>
<dbReference type="GO" id="GO:0043328">
    <property type="term" value="P:protein transport to vacuole involved in ubiquitin-dependent protein catabolic process via the multivesicular body sorting pathway"/>
    <property type="evidence" value="ECO:0000318"/>
    <property type="project" value="GO_Central"/>
</dbReference>
<dbReference type="GO" id="GO:0043162">
    <property type="term" value="P:ubiquitin-dependent protein catabolic process via the multivesicular body sorting pathway"/>
    <property type="evidence" value="ECO:0000315"/>
    <property type="project" value="UniProtKB"/>
</dbReference>
<dbReference type="GO" id="GO:0039702">
    <property type="term" value="P:viral budding via host ESCRT complex"/>
    <property type="evidence" value="ECO:0000304"/>
    <property type="project" value="ParkinsonsUK-UCL"/>
</dbReference>
<dbReference type="FunFam" id="1.20.120.1130:FF:000001">
    <property type="entry name" value="Vacuolar protein sorting-associated protein 28 homolog"/>
    <property type="match status" value="1"/>
</dbReference>
<dbReference type="FunFam" id="1.20.1440.200:FF:000001">
    <property type="entry name" value="Vacuolar protein sorting-associated protein 28 homolog"/>
    <property type="match status" value="1"/>
</dbReference>
<dbReference type="Gene3D" id="1.20.120.1130">
    <property type="match status" value="1"/>
</dbReference>
<dbReference type="Gene3D" id="1.20.1440.200">
    <property type="match status" value="1"/>
</dbReference>
<dbReference type="InterPro" id="IPR037202">
    <property type="entry name" value="ESCRT_assembly_dom"/>
</dbReference>
<dbReference type="InterPro" id="IPR007143">
    <property type="entry name" value="Vps28"/>
</dbReference>
<dbReference type="InterPro" id="IPR017899">
    <property type="entry name" value="VPS28_C"/>
</dbReference>
<dbReference type="InterPro" id="IPR037206">
    <property type="entry name" value="VPS28_C_sf"/>
</dbReference>
<dbReference type="InterPro" id="IPR017898">
    <property type="entry name" value="VPS28_N"/>
</dbReference>
<dbReference type="InterPro" id="IPR038358">
    <property type="entry name" value="VPS28_N_sf"/>
</dbReference>
<dbReference type="PANTHER" id="PTHR12937">
    <property type="entry name" value="VACUOLAR PROTEIN SORTING 28, ISOFORM 2 VPS28"/>
    <property type="match status" value="1"/>
</dbReference>
<dbReference type="PANTHER" id="PTHR12937:SF0">
    <property type="entry name" value="VACUOLAR PROTEIN SORTING-ASSOCIATED PROTEIN 28 HOMOLOG"/>
    <property type="match status" value="1"/>
</dbReference>
<dbReference type="Pfam" id="PF03997">
    <property type="entry name" value="VPS28"/>
    <property type="match status" value="1"/>
</dbReference>
<dbReference type="PIRSF" id="PIRSF017535">
    <property type="entry name" value="VPS28"/>
    <property type="match status" value="1"/>
</dbReference>
<dbReference type="SUPFAM" id="SSF140111">
    <property type="entry name" value="Endosomal sorting complex assembly domain"/>
    <property type="match status" value="1"/>
</dbReference>
<dbReference type="SUPFAM" id="SSF140427">
    <property type="entry name" value="VPS28 C-terminal domain-like"/>
    <property type="match status" value="1"/>
</dbReference>
<dbReference type="PROSITE" id="PS51310">
    <property type="entry name" value="VPS28_C"/>
    <property type="match status" value="1"/>
</dbReference>
<dbReference type="PROSITE" id="PS51313">
    <property type="entry name" value="VPS28_N"/>
    <property type="match status" value="1"/>
</dbReference>
<name>VPS28_HUMAN</name>
<feature type="chain" id="PRO_0000120951" description="Vacuolar protein sorting-associated protein 28 homolog">
    <location>
        <begin position="1"/>
        <end position="221"/>
    </location>
</feature>
<feature type="domain" description="VPS28 N-terminal" evidence="2">
    <location>
        <begin position="13"/>
        <end position="120"/>
    </location>
</feature>
<feature type="domain" description="VPS28 C-terminal" evidence="1">
    <location>
        <begin position="124"/>
        <end position="220"/>
    </location>
</feature>
<feature type="modified residue" description="N-acetylmethionine" evidence="12">
    <location>
        <position position="1"/>
    </location>
</feature>
<feature type="splice variant" id="VSP_042028" description="In isoform 2." evidence="11">
    <original>LQTLSGMSASDELDDSQVRQMLFDLESAYNAFNRFLHA</original>
    <variation>WVSLPARQSPAVPETLPARRSPAVPLRPSAPTCPVLHSQAADPERHVGVR</variation>
    <location>
        <begin position="184"/>
        <end position="221"/>
    </location>
</feature>
<feature type="helix" evidence="13">
    <location>
        <begin position="30"/>
        <end position="57"/>
    </location>
</feature>
<feature type="helix" evidence="13">
    <location>
        <begin position="63"/>
        <end position="84"/>
    </location>
</feature>
<feature type="strand" evidence="13">
    <location>
        <begin position="86"/>
        <end position="88"/>
    </location>
</feature>
<feature type="helix" evidence="13">
    <location>
        <begin position="92"/>
        <end position="98"/>
    </location>
</feature>
<feature type="helix" evidence="13">
    <location>
        <begin position="104"/>
        <end position="112"/>
    </location>
</feature>
<sequence length="221" mass="25425">MFHGIPATPGIGAPGNKPELYEEVKLYKNAREREKYDNMAELFAVVKTMQALEKAYIKDCVSPSEYTAACSRLLVQYKAAFRQVQGSEISSIDEFCRKFRLDCPLAMERIKEDRPITIKDDKGNLNRCIADVVSLFITVMDKLRLEIRAMDEIQPDLRELMETMHRMSHLPPDFEGRQTVSQWLQTLSGMSASDELDDSQVRQMLFDLESAYNAFNRFLHA</sequence>
<protein>
    <recommendedName>
        <fullName>Vacuolar protein sorting-associated protein 28 homolog</fullName>
        <shortName>H-Vps28</shortName>
    </recommendedName>
    <alternativeName>
        <fullName>ESCRT-I complex subunit VPS28</fullName>
    </alternativeName>
</protein>
<keyword id="KW-0002">3D-structure</keyword>
<keyword id="KW-0007">Acetylation</keyword>
<keyword id="KW-0025">Alternative splicing</keyword>
<keyword id="KW-1003">Cell membrane</keyword>
<keyword id="KW-0967">Endosome</keyword>
<keyword id="KW-0472">Membrane</keyword>
<keyword id="KW-0653">Protein transport</keyword>
<keyword id="KW-1267">Proteomics identification</keyword>
<keyword id="KW-1185">Reference proteome</keyword>
<keyword id="KW-0813">Transport</keyword>
<evidence type="ECO:0000255" key="1">
    <source>
        <dbReference type="PROSITE-ProRule" id="PRU00642"/>
    </source>
</evidence>
<evidence type="ECO:0000255" key="2">
    <source>
        <dbReference type="PROSITE-ProRule" id="PRU00645"/>
    </source>
</evidence>
<evidence type="ECO:0000269" key="3">
    <source>
    </source>
</evidence>
<evidence type="ECO:0000269" key="4">
    <source>
    </source>
</evidence>
<evidence type="ECO:0000269" key="5">
    <source>
    </source>
</evidence>
<evidence type="ECO:0000269" key="6">
    <source>
    </source>
</evidence>
<evidence type="ECO:0000269" key="7">
    <source>
    </source>
</evidence>
<evidence type="ECO:0000269" key="8">
    <source>
    </source>
</evidence>
<evidence type="ECO:0000269" key="9">
    <source>
    </source>
</evidence>
<evidence type="ECO:0000269" key="10">
    <source>
    </source>
</evidence>
<evidence type="ECO:0000303" key="11">
    <source>
    </source>
</evidence>
<evidence type="ECO:0007744" key="12">
    <source>
    </source>
</evidence>
<evidence type="ECO:0007829" key="13">
    <source>
        <dbReference type="PDB" id="6VME"/>
    </source>
</evidence>
<proteinExistence type="evidence at protein level"/>
<reference key="1">
    <citation type="submission" date="1999-09" db="EMBL/GenBank/DDBJ databases">
        <title>H-vps28, a human homolog of yeast class E protein Vps28p localizes to an abnormal compartment in I-cell fibroblasts.</title>
        <authorList>
            <person name="Hunt P.R."/>
            <person name="Pevsner J."/>
        </authorList>
    </citation>
    <scope>NUCLEOTIDE SEQUENCE [MRNA] (ISOFORM 1)</scope>
</reference>
<reference key="2">
    <citation type="journal article" date="2006" name="Nature">
        <title>DNA sequence and analysis of human chromosome 8.</title>
        <authorList>
            <person name="Nusbaum C."/>
            <person name="Mikkelsen T.S."/>
            <person name="Zody M.C."/>
            <person name="Asakawa S."/>
            <person name="Taudien S."/>
            <person name="Garber M."/>
            <person name="Kodira C.D."/>
            <person name="Schueler M.G."/>
            <person name="Shimizu A."/>
            <person name="Whittaker C.A."/>
            <person name="Chang J.L."/>
            <person name="Cuomo C.A."/>
            <person name="Dewar K."/>
            <person name="FitzGerald M.G."/>
            <person name="Yang X."/>
            <person name="Allen N.R."/>
            <person name="Anderson S."/>
            <person name="Asakawa T."/>
            <person name="Blechschmidt K."/>
            <person name="Bloom T."/>
            <person name="Borowsky M.L."/>
            <person name="Butler J."/>
            <person name="Cook A."/>
            <person name="Corum B."/>
            <person name="DeArellano K."/>
            <person name="DeCaprio D."/>
            <person name="Dooley K.T."/>
            <person name="Dorris L. III"/>
            <person name="Engels R."/>
            <person name="Gloeckner G."/>
            <person name="Hafez N."/>
            <person name="Hagopian D.S."/>
            <person name="Hall J.L."/>
            <person name="Ishikawa S.K."/>
            <person name="Jaffe D.B."/>
            <person name="Kamat A."/>
            <person name="Kudoh J."/>
            <person name="Lehmann R."/>
            <person name="Lokitsang T."/>
            <person name="Macdonald P."/>
            <person name="Major J.E."/>
            <person name="Matthews C.D."/>
            <person name="Mauceli E."/>
            <person name="Menzel U."/>
            <person name="Mihalev A.H."/>
            <person name="Minoshima S."/>
            <person name="Murayama Y."/>
            <person name="Naylor J.W."/>
            <person name="Nicol R."/>
            <person name="Nguyen C."/>
            <person name="O'Leary S.B."/>
            <person name="O'Neill K."/>
            <person name="Parker S.C.J."/>
            <person name="Polley A."/>
            <person name="Raymond C.K."/>
            <person name="Reichwald K."/>
            <person name="Rodriguez J."/>
            <person name="Sasaki T."/>
            <person name="Schilhabel M."/>
            <person name="Siddiqui R."/>
            <person name="Smith C.L."/>
            <person name="Sneddon T.P."/>
            <person name="Talamas J.A."/>
            <person name="Tenzin P."/>
            <person name="Topham K."/>
            <person name="Venkataraman V."/>
            <person name="Wen G."/>
            <person name="Yamazaki S."/>
            <person name="Young S.K."/>
            <person name="Zeng Q."/>
            <person name="Zimmer A.R."/>
            <person name="Rosenthal A."/>
            <person name="Birren B.W."/>
            <person name="Platzer M."/>
            <person name="Shimizu N."/>
            <person name="Lander E.S."/>
        </authorList>
    </citation>
    <scope>NUCLEOTIDE SEQUENCE [LARGE SCALE GENOMIC DNA]</scope>
</reference>
<reference key="3">
    <citation type="journal article" date="2004" name="Genome Res.">
        <title>The status, quality, and expansion of the NIH full-length cDNA project: the Mammalian Gene Collection (MGC).</title>
        <authorList>
            <consortium name="The MGC Project Team"/>
        </authorList>
    </citation>
    <scope>NUCLEOTIDE SEQUENCE [LARGE SCALE MRNA] (ISOFORMS 1 AND 2)</scope>
    <source>
        <tissue>Lung</tissue>
    </source>
</reference>
<reference key="4">
    <citation type="journal article" date="2002" name="J. Cell Biol.">
        <title>Mammalian class E vps proteins recognize ubiquitin and act in the removal of endosomal protein-ubiquitin conjugates.</title>
        <authorList>
            <person name="Bishop N."/>
            <person name="Horman A."/>
            <person name="Woodman P."/>
        </authorList>
    </citation>
    <scope>FUNCTION</scope>
    <scope>SUBCELLULAR LOCATION</scope>
</reference>
<reference key="5">
    <citation type="journal article" date="2003" name="Cell">
        <title>The protein network of HIV budding.</title>
        <authorList>
            <person name="von Schwedler U.K."/>
            <person name="Stuchell M."/>
            <person name="Mueller B."/>
            <person name="Ward D.M."/>
            <person name="Chung H.-Y."/>
            <person name="Morita E."/>
            <person name="Wang H.E."/>
            <person name="Davis T."/>
            <person name="He G.P."/>
            <person name="Cimbora D.M."/>
            <person name="Scott A."/>
            <person name="Kraeusslich H.-G."/>
            <person name="Kaplan J."/>
            <person name="Morham S.G."/>
            <person name="Sundquist W.I."/>
        </authorList>
    </citation>
    <scope>INTERACTION WITH TSG101</scope>
</reference>
<reference key="6">
    <citation type="journal article" date="2004" name="J. Biol. Chem.">
        <title>The human endosomal sorting complex required for transport (ESCRT-I) and its role in HIV-1 budding.</title>
        <authorList>
            <person name="Stuchell M.D."/>
            <person name="Garrus J.E."/>
            <person name="Mueller B."/>
            <person name="Stray K.M."/>
            <person name="Ghaffarian S."/>
            <person name="McKinnon R."/>
            <person name="Kraeusslich H.-G."/>
            <person name="Morham S.G."/>
            <person name="Sundquist W.I."/>
        </authorList>
    </citation>
    <scope>INTERACTION WITH VPS37B</scope>
</reference>
<reference key="7">
    <citation type="journal article" date="2007" name="Cell Host Microbe">
        <title>Identification of human MVB12 proteins as ESCRT-I subunits that function in HIV budding.</title>
        <authorList>
            <person name="Morita E."/>
            <person name="Sandrin V."/>
            <person name="Alam S.L."/>
            <person name="Eckert D.M."/>
            <person name="Gygi S.P."/>
            <person name="Sundquist W.I."/>
        </authorList>
    </citation>
    <scope>INTERACTION WITH TSG101; VPS37B; VPS37C; MVB12A AND MVB12B</scope>
    <scope>RECONSTITUTION OF THE ESCRT-I COMPLEX</scope>
</reference>
<reference key="8">
    <citation type="journal article" date="2007" name="EMBO J.">
        <title>Human ESCRT and ALIX proteins interact with proteins of the midbody and function in cytokinesis.</title>
        <authorList>
            <person name="Morita E."/>
            <person name="Sandrin V."/>
            <person name="Chung H.Y."/>
            <person name="Morham S.G."/>
            <person name="Gygi S.P."/>
            <person name="Rodesch C.K."/>
            <person name="Sundquist W.I."/>
        </authorList>
    </citation>
    <scope>INTERACTION WITH CEP55</scope>
</reference>
<reference key="9">
    <citation type="journal article" date="2008" name="Dev. Cell">
        <title>Integrated structural model and membrane targeting mechanism of the human ESCRT-II complex.</title>
        <authorList>
            <person name="Im Y.J."/>
            <person name="Hurley J.H."/>
        </authorList>
    </citation>
    <scope>INTERACTION WITH VPS36; SNF8 AND VPS25</scope>
</reference>
<reference key="10">
    <citation type="journal article" date="2011" name="BMC Syst. Biol.">
        <title>Initial characterization of the human central proteome.</title>
        <authorList>
            <person name="Burkard T.R."/>
            <person name="Planyavsky M."/>
            <person name="Kaupe I."/>
            <person name="Breitwieser F.P."/>
            <person name="Buerckstuemmer T."/>
            <person name="Bennett K.L."/>
            <person name="Superti-Furga G."/>
            <person name="Colinge J."/>
        </authorList>
    </citation>
    <scope>IDENTIFICATION BY MASS SPECTROMETRY [LARGE SCALE ANALYSIS]</scope>
</reference>
<reference key="11">
    <citation type="journal article" date="2011" name="Curr. Biol.">
        <title>UBAP1 is a component of an endosome-specific ESCRT-I complex that is essential for MVB sorting.</title>
        <authorList>
            <person name="Stefani F."/>
            <person name="Zhang L."/>
            <person name="Taylor S."/>
            <person name="Donovan J."/>
            <person name="Rollinson S."/>
            <person name="Doyotte A."/>
            <person name="Brownhill K."/>
            <person name="Bennion J."/>
            <person name="Pickering-Brown S."/>
            <person name="Woodman P."/>
        </authorList>
    </citation>
    <scope>IDENTIFICATION IN AN ESCRT-I COMPLEX WITH UBAP1</scope>
    <scope>SUBUNIT</scope>
</reference>
<reference key="12">
    <citation type="journal article" date="2015" name="Proteomics">
        <title>N-terminome analysis of the human mitochondrial proteome.</title>
        <authorList>
            <person name="Vaca Jacome A.S."/>
            <person name="Rabilloud T."/>
            <person name="Schaeffer-Reiss C."/>
            <person name="Rompais M."/>
            <person name="Ayoub D."/>
            <person name="Lane L."/>
            <person name="Bairoch A."/>
            <person name="Van Dorsselaer A."/>
            <person name="Carapito C."/>
        </authorList>
    </citation>
    <scope>ACETYLATION [LARGE SCALE ANALYSIS] AT MET-1</scope>
    <scope>IDENTIFICATION BY MASS SPECTROMETRY [LARGE SCALE ANALYSIS]</scope>
</reference>
<reference key="13">
    <citation type="journal article" date="2019" name="Am. J. Hum. Genet.">
        <title>Truncating mutations in UBAP1 cause hereditary spastic paraplegia.</title>
        <authorList>
            <person name="Farazi Fard M.A."/>
            <person name="Rebelo A.P."/>
            <person name="Buglo E."/>
            <person name="Nemati H."/>
            <person name="Dastsooz H."/>
            <person name="Gehweiler I."/>
            <person name="Reich S."/>
            <person name="Reichbauer J."/>
            <person name="Quintans B."/>
            <person name="Ordonez-Ugalde A."/>
            <person name="Cortese A."/>
            <person name="Courel S."/>
            <person name="Abreu L."/>
            <person name="Powell E."/>
            <person name="Danzi M.C."/>
            <person name="Martuscelli N.B."/>
            <person name="Bis-Brewer D.M."/>
            <person name="Tao F."/>
            <person name="Zarei F."/>
            <person name="Habibzadeh P."/>
            <person name="Yavarian M."/>
            <person name="Modarresi F."/>
            <person name="Silawi M."/>
            <person name="Tabatabaei Z."/>
            <person name="Yousefi M."/>
            <person name="Farpour H.R."/>
            <person name="Kessler C."/>
            <person name="Mangold E."/>
            <person name="Kobeleva X."/>
            <person name="Tournev I."/>
            <person name="Chamova T."/>
            <person name="Mueller A.J."/>
            <person name="Haack T.B."/>
            <person name="Tarnopolsky M."/>
            <person name="Gan-Or Z."/>
            <person name="Rouleau G.A."/>
            <person name="Synofzik M."/>
            <person name="Sobrido M.J."/>
            <person name="Jordanova A."/>
            <person name="Schuele R."/>
            <person name="Zuchner S."/>
            <person name="Faghihi M.A."/>
        </authorList>
    </citation>
    <scope>INTERACTION WITH UBAP1</scope>
</reference>